<reference key="1">
    <citation type="submission" date="2004-07" db="EMBL/GenBank/DDBJ databases">
        <authorList>
            <consortium name="NIH - Xenopus Gene Collection (XGC) project"/>
        </authorList>
    </citation>
    <scope>NUCLEOTIDE SEQUENCE [LARGE SCALE MRNA]</scope>
    <source>
        <tissue>Oocyte</tissue>
    </source>
</reference>
<feature type="chain" id="PRO_0000215226" description="Vacuolar protein-sorting-associated protein 36">
    <location>
        <begin position="1"/>
        <end position="388"/>
    </location>
</feature>
<feature type="domain" description="GLUE N-terminal" evidence="4">
    <location>
        <begin position="1"/>
        <end position="88"/>
    </location>
</feature>
<feature type="domain" description="GLUE C-terminal" evidence="4">
    <location>
        <begin position="105"/>
        <end position="138"/>
    </location>
</feature>
<feature type="coiled-coil region" evidence="3">
    <location>
        <begin position="162"/>
        <end position="198"/>
    </location>
</feature>
<proteinExistence type="evidence at transcript level"/>
<keyword id="KW-0175">Coiled coil</keyword>
<keyword id="KW-0963">Cytoplasm</keyword>
<keyword id="KW-0967">Endosome</keyword>
<keyword id="KW-0653">Protein transport</keyword>
<keyword id="KW-1185">Reference proteome</keyword>
<keyword id="KW-0813">Transport</keyword>
<gene>
    <name type="primary">vps36</name>
</gene>
<accession>Q6DDF4</accession>
<protein>
    <recommendedName>
        <fullName>Vacuolar protein-sorting-associated protein 36</fullName>
    </recommendedName>
    <alternativeName>
        <fullName>ESCRT-II complex subunit VPS36</fullName>
    </alternativeName>
</protein>
<name>VPS36_XENLA</name>
<comment type="function">
    <text evidence="2">Component of the ESCRT-II complex (endosomal sorting complex required for transport II), which is required for multivesicular body (MVB) formation and sorting of endosomal cargo proteins into MVBs. The MVB pathway mediates delivery of transmembrane proteins into the lumen of the lysosome for degradation. The ESCRT-II complex is probably involved in the recruitment of the ESCRT-III complex.</text>
</comment>
<comment type="subunit">
    <text evidence="2">Component of the endosomal sorting required for transport complex II (ESCRT-II), composed of SNF8, VPS25 and VPS36.</text>
</comment>
<comment type="subcellular location">
    <subcellularLocation>
        <location evidence="1">Cytoplasm</location>
    </subcellularLocation>
    <subcellularLocation>
        <location evidence="1">Endosome</location>
    </subcellularLocation>
</comment>
<comment type="similarity">
    <text evidence="5">Belongs to the VPS36 family.</text>
</comment>
<evidence type="ECO:0000250" key="1"/>
<evidence type="ECO:0000250" key="2">
    <source>
        <dbReference type="UniProtKB" id="Q86VN1"/>
    </source>
</evidence>
<evidence type="ECO:0000255" key="3"/>
<evidence type="ECO:0000255" key="4">
    <source>
        <dbReference type="PROSITE-ProRule" id="PRU00828"/>
    </source>
</evidence>
<evidence type="ECO:0000305" key="5"/>
<organism>
    <name type="scientific">Xenopus laevis</name>
    <name type="common">African clawed frog</name>
    <dbReference type="NCBI Taxonomy" id="8355"/>
    <lineage>
        <taxon>Eukaryota</taxon>
        <taxon>Metazoa</taxon>
        <taxon>Chordata</taxon>
        <taxon>Craniata</taxon>
        <taxon>Vertebrata</taxon>
        <taxon>Euteleostomi</taxon>
        <taxon>Amphibia</taxon>
        <taxon>Batrachia</taxon>
        <taxon>Anura</taxon>
        <taxon>Pipoidea</taxon>
        <taxon>Pipidae</taxon>
        <taxon>Xenopodinae</taxon>
        <taxon>Xenopus</taxon>
        <taxon>Xenopus</taxon>
    </lineage>
</organism>
<dbReference type="EMBL" id="BC077615">
    <property type="protein sequence ID" value="AAH77615.1"/>
    <property type="molecule type" value="mRNA"/>
</dbReference>
<dbReference type="RefSeq" id="NP_001086892.1">
    <property type="nucleotide sequence ID" value="NM_001093423.1"/>
</dbReference>
<dbReference type="SMR" id="Q6DDF4"/>
<dbReference type="DNASU" id="446727"/>
<dbReference type="GeneID" id="446727"/>
<dbReference type="KEGG" id="xla:446727"/>
<dbReference type="AGR" id="Xenbase:XB-GENE-6255362"/>
<dbReference type="CTD" id="446727"/>
<dbReference type="Xenbase" id="XB-GENE-6255362">
    <property type="gene designation" value="vps36.L"/>
</dbReference>
<dbReference type="OrthoDB" id="271448at2759"/>
<dbReference type="Proteomes" id="UP000186698">
    <property type="component" value="Chromosome 2L"/>
</dbReference>
<dbReference type="Bgee" id="446727">
    <property type="expression patterns" value="Expressed in zone of skin and 19 other cell types or tissues"/>
</dbReference>
<dbReference type="GO" id="GO:0005768">
    <property type="term" value="C:endosome"/>
    <property type="evidence" value="ECO:0000250"/>
    <property type="project" value="UniProtKB"/>
</dbReference>
<dbReference type="GO" id="GO:0000814">
    <property type="term" value="C:ESCRT II complex"/>
    <property type="evidence" value="ECO:0000318"/>
    <property type="project" value="GO_Central"/>
</dbReference>
<dbReference type="GO" id="GO:0031902">
    <property type="term" value="C:late endosome membrane"/>
    <property type="evidence" value="ECO:0000318"/>
    <property type="project" value="GO_Central"/>
</dbReference>
<dbReference type="GO" id="GO:0003730">
    <property type="term" value="F:mRNA 3'-UTR binding"/>
    <property type="evidence" value="ECO:0000314"/>
    <property type="project" value="UniProtKB"/>
</dbReference>
<dbReference type="GO" id="GO:0032266">
    <property type="term" value="F:phosphatidylinositol-3-phosphate binding"/>
    <property type="evidence" value="ECO:0007669"/>
    <property type="project" value="InterPro"/>
</dbReference>
<dbReference type="GO" id="GO:0043130">
    <property type="term" value="F:ubiquitin binding"/>
    <property type="evidence" value="ECO:0000318"/>
    <property type="project" value="GO_Central"/>
</dbReference>
<dbReference type="GO" id="GO:0043328">
    <property type="term" value="P:protein transport to vacuole involved in ubiquitin-dependent protein catabolic process via the multivesicular body sorting pathway"/>
    <property type="evidence" value="ECO:0000318"/>
    <property type="project" value="GO_Central"/>
</dbReference>
<dbReference type="CDD" id="cd13226">
    <property type="entry name" value="PH-GRAM-like_Eap45"/>
    <property type="match status" value="1"/>
</dbReference>
<dbReference type="FunFam" id="1.10.10.10:FF:000203">
    <property type="entry name" value="Vacuolar protein sorting 36 homolog"/>
    <property type="match status" value="1"/>
</dbReference>
<dbReference type="FunFam" id="2.30.29.30:FF:000241">
    <property type="entry name" value="Vacuolar protein sorting 36 homolog"/>
    <property type="match status" value="1"/>
</dbReference>
<dbReference type="FunFam" id="1.10.10.10:FF:000170">
    <property type="entry name" value="Vacuolar protein-sorting-associated protein 36"/>
    <property type="match status" value="1"/>
</dbReference>
<dbReference type="Gene3D" id="6.10.140.260">
    <property type="match status" value="1"/>
</dbReference>
<dbReference type="Gene3D" id="2.30.29.30">
    <property type="entry name" value="Pleckstrin-homology domain (PH domain)/Phosphotyrosine-binding domain (PTB)"/>
    <property type="match status" value="1"/>
</dbReference>
<dbReference type="Gene3D" id="1.10.10.10">
    <property type="entry name" value="Winged helix-like DNA-binding domain superfamily/Winged helix DNA-binding domain"/>
    <property type="match status" value="2"/>
</dbReference>
<dbReference type="InterPro" id="IPR021648">
    <property type="entry name" value="GLUE_dom"/>
</dbReference>
<dbReference type="InterPro" id="IPR011993">
    <property type="entry name" value="PH-like_dom_sf"/>
</dbReference>
<dbReference type="InterPro" id="IPR040608">
    <property type="entry name" value="Snf8/Vps36"/>
</dbReference>
<dbReference type="InterPro" id="IPR037855">
    <property type="entry name" value="Vps36"/>
</dbReference>
<dbReference type="InterPro" id="IPR036388">
    <property type="entry name" value="WH-like_DNA-bd_sf"/>
</dbReference>
<dbReference type="InterPro" id="IPR036390">
    <property type="entry name" value="WH_DNA-bd_sf"/>
</dbReference>
<dbReference type="PANTHER" id="PTHR13128">
    <property type="entry name" value="VACUOLAR PROTEIN-SORTING-ASSOCIATED PROTEIN 36"/>
    <property type="match status" value="1"/>
</dbReference>
<dbReference type="PANTHER" id="PTHR13128:SF12">
    <property type="entry name" value="VACUOLAR PROTEIN-SORTING-ASSOCIATED PROTEIN 36"/>
    <property type="match status" value="1"/>
</dbReference>
<dbReference type="Pfam" id="PF04157">
    <property type="entry name" value="EAP30"/>
    <property type="match status" value="1"/>
</dbReference>
<dbReference type="Pfam" id="PF11605">
    <property type="entry name" value="Vps36_ESCRT-II"/>
    <property type="match status" value="1"/>
</dbReference>
<dbReference type="SUPFAM" id="SSF50729">
    <property type="entry name" value="PH domain-like"/>
    <property type="match status" value="1"/>
</dbReference>
<dbReference type="SUPFAM" id="SSF46785">
    <property type="entry name" value="Winged helix' DNA-binding domain"/>
    <property type="match status" value="2"/>
</dbReference>
<dbReference type="PROSITE" id="PS51495">
    <property type="entry name" value="GLUE"/>
    <property type="match status" value="1"/>
</dbReference>
<sequence>MDRFSWCTGLLDIDETLVIQQRGVRLSDGEEKTKFDSGTLLLTTHRLIWRDQKNHDFCIAFPLSQIVFTEEQAGGIGKSAKIVVHLHPATPNKEPGPYQTSRYSYVKLSFREHGQIEFQRRLAEELTQRRWERLSASASPSMQMNKGPQTGRIKAVGIVGIERKLEEKRKETDKNISEAFEDLSKLMEKAKEMVELSKSIATKIKDKQGDISEDETIRFKSYLLSMGIANPVTRETHGSGTHYHMQLAKQLATMLQAPLEERGGIMSLTEVYCLVNRARGMELLSPEDLVNACKMLESLKLPIRLRVFDSGVMVIEHQSHNEEEMVASALETVSEKGSLTSEEFAKIVGMSVLLAKERLLLAENMGHLCRDDSVEGLRFYPNLFLTQS</sequence>